<name>MOK_MOUSE</name>
<reference key="1">
    <citation type="journal article" date="1999" name="Genes Cells">
        <title>Molecular cloning and characterization of a novel member of the MAP kinase superfamily.</title>
        <authorList>
            <person name="Miyata Y."/>
            <person name="Akashi M."/>
            <person name="Nishida E."/>
        </authorList>
    </citation>
    <scope>NUCLEOTIDE SEQUENCE [MRNA] (ISOFORM 1)</scope>
    <scope>FUNCTION</scope>
    <scope>CATALYTIC ACTIVITY</scope>
    <scope>COFACTOR</scope>
    <scope>SUBCELLULAR LOCATION</scope>
    <scope>AUTOPHOSPHORYLATION</scope>
    <scope>MUTAGENESIS OF THR-159 AND TYR-161</scope>
    <source>
        <strain>C57BL/6J</strain>
        <tissue>Brain</tissue>
    </source>
</reference>
<reference key="2">
    <citation type="journal article" date="2004" name="Genome Res.">
        <title>The status, quality, and expansion of the NIH full-length cDNA project: the Mammalian Gene Collection (MGC).</title>
        <authorList>
            <consortium name="The MGC Project Team"/>
        </authorList>
    </citation>
    <scope>NUCLEOTIDE SEQUENCE [LARGE SCALE MRNA] (ISOFORM 2)</scope>
    <source>
        <strain>C57BL/6J</strain>
        <tissue>Retina</tissue>
    </source>
</reference>
<reference key="3">
    <citation type="journal article" date="2014" name="PLoS ONE">
        <title>Regulation of cilium length and intraflagellar transport by the RCK-kinases ICK and MOK in renal epithelial cells.</title>
        <authorList>
            <person name="Broekhuis J.R."/>
            <person name="Verhey K.J."/>
            <person name="Jansen G."/>
        </authorList>
    </citation>
    <scope>FUNCTION</scope>
    <scope>SUBCELLULAR LOCATION</scope>
</reference>
<keyword id="KW-0025">Alternative splicing</keyword>
<keyword id="KW-0067">ATP-binding</keyword>
<keyword id="KW-0966">Cell projection</keyword>
<keyword id="KW-0963">Cytoplasm</keyword>
<keyword id="KW-0418">Kinase</keyword>
<keyword id="KW-0460">Magnesium</keyword>
<keyword id="KW-0479">Metal-binding</keyword>
<keyword id="KW-0547">Nucleotide-binding</keyword>
<keyword id="KW-0539">Nucleus</keyword>
<keyword id="KW-0597">Phosphoprotein</keyword>
<keyword id="KW-1185">Reference proteome</keyword>
<keyword id="KW-0723">Serine/threonine-protein kinase</keyword>
<keyword id="KW-0808">Transferase</keyword>
<dbReference type="EC" id="2.7.11.22" evidence="4"/>
<dbReference type="EMBL" id="AB022695">
    <property type="protein sequence ID" value="BAA81689.1"/>
    <property type="molecule type" value="mRNA"/>
</dbReference>
<dbReference type="EMBL" id="BC037614">
    <property type="protein sequence ID" value="AAH37614.1"/>
    <property type="molecule type" value="mRNA"/>
</dbReference>
<dbReference type="CCDS" id="CCDS49176.1">
    <molecule id="Q9WVS4-1"/>
</dbReference>
<dbReference type="RefSeq" id="NP_036103.1">
    <molecule id="Q9WVS4-1"/>
    <property type="nucleotide sequence ID" value="NM_011973.3"/>
</dbReference>
<dbReference type="SMR" id="Q9WVS4"/>
<dbReference type="FunCoup" id="Q9WVS4">
    <property type="interactions" value="1090"/>
</dbReference>
<dbReference type="IntAct" id="Q9WVS4">
    <property type="interactions" value="1"/>
</dbReference>
<dbReference type="STRING" id="10090.ENSMUSP00000068904"/>
<dbReference type="GlyGen" id="Q9WVS4">
    <property type="glycosylation" value="2 sites, 2 N-linked glycans (2 sites)"/>
</dbReference>
<dbReference type="iPTMnet" id="Q9WVS4"/>
<dbReference type="PhosphoSitePlus" id="Q9WVS4"/>
<dbReference type="PaxDb" id="10090-ENSMUSP00000068904"/>
<dbReference type="ProteomicsDB" id="252589">
    <molecule id="Q9WVS4-1"/>
</dbReference>
<dbReference type="ProteomicsDB" id="252590">
    <molecule id="Q9WVS4-2"/>
</dbReference>
<dbReference type="Antibodypedia" id="27789">
    <property type="antibodies" value="446 antibodies from 33 providers"/>
</dbReference>
<dbReference type="DNASU" id="26448"/>
<dbReference type="Ensembl" id="ENSMUST00000070565.15">
    <molecule id="Q9WVS4-1"/>
    <property type="protein sequence ID" value="ENSMUSP00000068904.9"/>
    <property type="gene ID" value="ENSMUSG00000056458.17"/>
</dbReference>
<dbReference type="GeneID" id="26448"/>
<dbReference type="KEGG" id="mmu:26448"/>
<dbReference type="UCSC" id="uc007pbv.1">
    <molecule id="Q9WVS4-1"/>
    <property type="organism name" value="mouse"/>
</dbReference>
<dbReference type="UCSC" id="uc007pbx.1">
    <molecule id="Q9WVS4-2"/>
    <property type="organism name" value="mouse"/>
</dbReference>
<dbReference type="AGR" id="MGI:1336881"/>
<dbReference type="CTD" id="5891"/>
<dbReference type="MGI" id="MGI:1336881">
    <property type="gene designation" value="Mok"/>
</dbReference>
<dbReference type="VEuPathDB" id="HostDB:ENSMUSG00000056458"/>
<dbReference type="eggNOG" id="KOG0661">
    <property type="taxonomic scope" value="Eukaryota"/>
</dbReference>
<dbReference type="GeneTree" id="ENSGT00940000159582"/>
<dbReference type="HOGENOM" id="CLU_000288_181_1_1"/>
<dbReference type="InParanoid" id="Q9WVS4"/>
<dbReference type="OMA" id="FHFPFKK"/>
<dbReference type="OrthoDB" id="2158884at2759"/>
<dbReference type="PhylomeDB" id="Q9WVS4"/>
<dbReference type="TreeFam" id="TF328769"/>
<dbReference type="BioGRID-ORCS" id="26448">
    <property type="hits" value="0 hits in 79 CRISPR screens"/>
</dbReference>
<dbReference type="ChiTaRS" id="Mok">
    <property type="organism name" value="mouse"/>
</dbReference>
<dbReference type="PRO" id="PR:Q9WVS4"/>
<dbReference type="Proteomes" id="UP000000589">
    <property type="component" value="Chromosome 12"/>
</dbReference>
<dbReference type="RNAct" id="Q9WVS4">
    <property type="molecule type" value="protein"/>
</dbReference>
<dbReference type="Bgee" id="ENSMUSG00000056458">
    <property type="expression patterns" value="Expressed in superior surface of tongue and 111 other cell types or tissues"/>
</dbReference>
<dbReference type="ExpressionAtlas" id="Q9WVS4">
    <property type="expression patterns" value="baseline and differential"/>
</dbReference>
<dbReference type="GO" id="GO:0097546">
    <property type="term" value="C:ciliary base"/>
    <property type="evidence" value="ECO:0000314"/>
    <property type="project" value="UniProtKB"/>
</dbReference>
<dbReference type="GO" id="GO:0005929">
    <property type="term" value="C:cilium"/>
    <property type="evidence" value="ECO:0000314"/>
    <property type="project" value="UniProtKB"/>
</dbReference>
<dbReference type="GO" id="GO:0005737">
    <property type="term" value="C:cytoplasm"/>
    <property type="evidence" value="ECO:0007669"/>
    <property type="project" value="UniProtKB-SubCell"/>
</dbReference>
<dbReference type="GO" id="GO:0005634">
    <property type="term" value="C:nucleus"/>
    <property type="evidence" value="ECO:0000314"/>
    <property type="project" value="UniProtKB"/>
</dbReference>
<dbReference type="GO" id="GO:0005524">
    <property type="term" value="F:ATP binding"/>
    <property type="evidence" value="ECO:0007669"/>
    <property type="project" value="UniProtKB-KW"/>
</dbReference>
<dbReference type="GO" id="GO:0004693">
    <property type="term" value="F:cyclin-dependent protein serine/threonine kinase activity"/>
    <property type="evidence" value="ECO:0007669"/>
    <property type="project" value="UniProtKB-EC"/>
</dbReference>
<dbReference type="GO" id="GO:0046872">
    <property type="term" value="F:metal ion binding"/>
    <property type="evidence" value="ECO:0007669"/>
    <property type="project" value="UniProtKB-KW"/>
</dbReference>
<dbReference type="GO" id="GO:0106310">
    <property type="term" value="F:protein serine kinase activity"/>
    <property type="evidence" value="ECO:0007669"/>
    <property type="project" value="RHEA"/>
</dbReference>
<dbReference type="CDD" id="cd07831">
    <property type="entry name" value="STKc_MOK"/>
    <property type="match status" value="1"/>
</dbReference>
<dbReference type="FunFam" id="1.10.510.10:FF:000402">
    <property type="entry name" value="MAPK/MAK/MRK overlapping kinase"/>
    <property type="match status" value="1"/>
</dbReference>
<dbReference type="FunFam" id="3.30.200.20:FF:000271">
    <property type="entry name" value="MAPK/MAK/MRK overlapping kinase"/>
    <property type="match status" value="1"/>
</dbReference>
<dbReference type="Gene3D" id="3.30.200.20">
    <property type="entry name" value="Phosphorylase Kinase, domain 1"/>
    <property type="match status" value="1"/>
</dbReference>
<dbReference type="Gene3D" id="1.10.510.10">
    <property type="entry name" value="Transferase(Phosphotransferase) domain 1"/>
    <property type="match status" value="1"/>
</dbReference>
<dbReference type="InterPro" id="IPR011009">
    <property type="entry name" value="Kinase-like_dom_sf"/>
</dbReference>
<dbReference type="InterPro" id="IPR050117">
    <property type="entry name" value="MAP_kinase"/>
</dbReference>
<dbReference type="InterPro" id="IPR000719">
    <property type="entry name" value="Prot_kinase_dom"/>
</dbReference>
<dbReference type="InterPro" id="IPR017441">
    <property type="entry name" value="Protein_kinase_ATP_BS"/>
</dbReference>
<dbReference type="InterPro" id="IPR008271">
    <property type="entry name" value="Ser/Thr_kinase_AS"/>
</dbReference>
<dbReference type="PANTHER" id="PTHR24055">
    <property type="entry name" value="MITOGEN-ACTIVATED PROTEIN KINASE"/>
    <property type="match status" value="1"/>
</dbReference>
<dbReference type="Pfam" id="PF00069">
    <property type="entry name" value="Pkinase"/>
    <property type="match status" value="1"/>
</dbReference>
<dbReference type="SMART" id="SM00220">
    <property type="entry name" value="S_TKc"/>
    <property type="match status" value="1"/>
</dbReference>
<dbReference type="SUPFAM" id="SSF56112">
    <property type="entry name" value="Protein kinase-like (PK-like)"/>
    <property type="match status" value="1"/>
</dbReference>
<dbReference type="PROSITE" id="PS00107">
    <property type="entry name" value="PROTEIN_KINASE_ATP"/>
    <property type="match status" value="1"/>
</dbReference>
<dbReference type="PROSITE" id="PS50011">
    <property type="entry name" value="PROTEIN_KINASE_DOM"/>
    <property type="match status" value="1"/>
</dbReference>
<dbReference type="PROSITE" id="PS00108">
    <property type="entry name" value="PROTEIN_KINASE_ST"/>
    <property type="match status" value="1"/>
</dbReference>
<feature type="chain" id="PRO_0000086342" description="MAPK/MAK/MRK overlapping kinase">
    <location>
        <begin position="1"/>
        <end position="420"/>
    </location>
</feature>
<feature type="domain" description="Protein kinase" evidence="1">
    <location>
        <begin position="4"/>
        <end position="285"/>
    </location>
</feature>
<feature type="region of interest" description="Disordered" evidence="3">
    <location>
        <begin position="311"/>
        <end position="344"/>
    </location>
</feature>
<feature type="compositionally biased region" description="Polar residues" evidence="3">
    <location>
        <begin position="311"/>
        <end position="322"/>
    </location>
</feature>
<feature type="compositionally biased region" description="Basic and acidic residues" evidence="3">
    <location>
        <begin position="323"/>
        <end position="338"/>
    </location>
</feature>
<feature type="active site" description="Proton acceptor" evidence="1 2">
    <location>
        <position position="128"/>
    </location>
</feature>
<feature type="binding site" evidence="1">
    <location>
        <begin position="10"/>
        <end position="18"/>
    </location>
    <ligand>
        <name>ATP</name>
        <dbReference type="ChEBI" id="CHEBI:30616"/>
    </ligand>
</feature>
<feature type="binding site" evidence="1">
    <location>
        <position position="33"/>
    </location>
    <ligand>
        <name>ATP</name>
        <dbReference type="ChEBI" id="CHEBI:30616"/>
    </ligand>
</feature>
<feature type="splice variant" id="VSP_009147" description="In isoform 2." evidence="6">
    <location>
        <begin position="1"/>
        <end position="92"/>
    </location>
</feature>
<feature type="splice variant" id="VSP_009148" description="In isoform 2." evidence="6">
    <original>IRG</original>
    <variation>MKR</variation>
    <location>
        <begin position="93"/>
        <end position="95"/>
    </location>
</feature>
<feature type="splice variant" id="VSP_009149" description="In isoform 2." evidence="6">
    <location>
        <begin position="232"/>
        <end position="289"/>
    </location>
</feature>
<feature type="splice variant" id="VSP_009150" description="In isoform 2." evidence="6">
    <original>KQSLRHEEGHARRQGPTSLMELPKLRLSGMTKLSSCSSPALRSVLGTGANGKVPVLRPLKCAAVNKKTDTQKDIKPHLKHYHLPTINRKGGEY</original>
    <variation>V</variation>
    <location>
        <begin position="328"/>
        <end position="420"/>
    </location>
</feature>
<feature type="mutagenesis site" description="Loss of activity; when associated with F-161." evidence="4">
    <original>T</original>
    <variation>A</variation>
    <location>
        <position position="159"/>
    </location>
</feature>
<feature type="mutagenesis site" description="Loss of activity; when associated with A-159." evidence="4">
    <original>Y</original>
    <variation>F</variation>
    <location>
        <position position="161"/>
    </location>
</feature>
<evidence type="ECO:0000255" key="1">
    <source>
        <dbReference type="PROSITE-ProRule" id="PRU00159"/>
    </source>
</evidence>
<evidence type="ECO:0000255" key="2">
    <source>
        <dbReference type="PROSITE-ProRule" id="PRU10027"/>
    </source>
</evidence>
<evidence type="ECO:0000256" key="3">
    <source>
        <dbReference type="SAM" id="MobiDB-lite"/>
    </source>
</evidence>
<evidence type="ECO:0000269" key="4">
    <source>
    </source>
</evidence>
<evidence type="ECO:0000269" key="5">
    <source>
    </source>
</evidence>
<evidence type="ECO:0000303" key="6">
    <source>
    </source>
</evidence>
<evidence type="ECO:0000305" key="7"/>
<organism>
    <name type="scientific">Mus musculus</name>
    <name type="common">Mouse</name>
    <dbReference type="NCBI Taxonomy" id="10090"/>
    <lineage>
        <taxon>Eukaryota</taxon>
        <taxon>Metazoa</taxon>
        <taxon>Chordata</taxon>
        <taxon>Craniata</taxon>
        <taxon>Vertebrata</taxon>
        <taxon>Euteleostomi</taxon>
        <taxon>Mammalia</taxon>
        <taxon>Eutheria</taxon>
        <taxon>Euarchontoglires</taxon>
        <taxon>Glires</taxon>
        <taxon>Rodentia</taxon>
        <taxon>Myomorpha</taxon>
        <taxon>Muroidea</taxon>
        <taxon>Muridae</taxon>
        <taxon>Murinae</taxon>
        <taxon>Mus</taxon>
        <taxon>Mus</taxon>
    </lineage>
</organism>
<gene>
    <name type="primary">Mok</name>
    <name type="synonym">Rage</name>
    <name type="synonym">Stk30</name>
</gene>
<protein>
    <recommendedName>
        <fullName>MAPK/MAK/MRK overlapping kinase</fullName>
        <ecNumber evidence="4">2.7.11.22</ecNumber>
    </recommendedName>
    <alternativeName>
        <fullName>MOK protein kinase</fullName>
    </alternativeName>
    <alternativeName>
        <fullName>Serine/threonine kinase 30</fullName>
    </alternativeName>
</protein>
<sequence>MKNYKAIGKIGEGTFSEVMKMQSLRDGNYYACKQMKQHFESIEQVNSLREIQALRRLNPHPNILALHEVVFDRKSGSLALICELMDMNIYELIRGRRHPLSEKKIMLYMYQLCKSLDHMHRNGIFHRDVKPENILVKQDVLKLGDFGSCRSVYSKQPYTEYISTRWYRAPECLLTDGFYTYKMDLWSAGCVFYEIASLQPLFPGVNELDQISKIHDVIGTPCQKTLTKFKQSRAMSFDFPFKKGSGIPLLTANLSPQCLSLLHAMVAYDPDERIAAHQALQHPYFQVQRAAETQTLAKHRRAFCPKFSMVPESSSHNWSFSQEGRKQKQSLRHEEGHARRQGPTSLMELPKLRLSGMTKLSSCSSPALRSVLGTGANGKVPVLRPLKCAAVNKKTDTQKDIKPHLKHYHLPTINRKGGEY</sequence>
<proteinExistence type="evidence at protein level"/>
<accession>Q9WVS4</accession>
<accession>Q8CFU4</accession>
<comment type="function">
    <text evidence="4 5">Able to phosphorylate several exogenous substrates and to undergo autophosphorylation (PubMed:10421840). Negatively regulates cilium length in a cAMP and mTORC1 signaling-dependent manner (PubMed:25243405).</text>
</comment>
<comment type="catalytic activity">
    <reaction evidence="4">
        <text>L-seryl-[protein] + ATP = O-phospho-L-seryl-[protein] + ADP + H(+)</text>
        <dbReference type="Rhea" id="RHEA:17989"/>
        <dbReference type="Rhea" id="RHEA-COMP:9863"/>
        <dbReference type="Rhea" id="RHEA-COMP:11604"/>
        <dbReference type="ChEBI" id="CHEBI:15378"/>
        <dbReference type="ChEBI" id="CHEBI:29999"/>
        <dbReference type="ChEBI" id="CHEBI:30616"/>
        <dbReference type="ChEBI" id="CHEBI:83421"/>
        <dbReference type="ChEBI" id="CHEBI:456216"/>
        <dbReference type="EC" id="2.7.11.22"/>
    </reaction>
</comment>
<comment type="catalytic activity">
    <reaction evidence="4">
        <text>L-threonyl-[protein] + ATP = O-phospho-L-threonyl-[protein] + ADP + H(+)</text>
        <dbReference type="Rhea" id="RHEA:46608"/>
        <dbReference type="Rhea" id="RHEA-COMP:11060"/>
        <dbReference type="Rhea" id="RHEA-COMP:11605"/>
        <dbReference type="ChEBI" id="CHEBI:15378"/>
        <dbReference type="ChEBI" id="CHEBI:30013"/>
        <dbReference type="ChEBI" id="CHEBI:30616"/>
        <dbReference type="ChEBI" id="CHEBI:61977"/>
        <dbReference type="ChEBI" id="CHEBI:456216"/>
        <dbReference type="EC" id="2.7.11.22"/>
    </reaction>
</comment>
<comment type="cofactor">
    <cofactor evidence="4">
        <name>Mg(2+)</name>
        <dbReference type="ChEBI" id="CHEBI:18420"/>
    </cofactor>
</comment>
<comment type="activity regulation">
    <text>Phosphorylation appears to increase the enzymatic activity.</text>
</comment>
<comment type="subcellular location">
    <subcellularLocation>
        <location evidence="4">Cytoplasm</location>
    </subcellularLocation>
    <subcellularLocation>
        <location evidence="5">Cell projection</location>
        <location evidence="5">Cilium</location>
    </subcellularLocation>
    <subcellularLocation>
        <location evidence="5">Nucleus</location>
    </subcellularLocation>
</comment>
<comment type="alternative products">
    <event type="alternative splicing"/>
    <isoform>
        <id>Q9WVS4-1</id>
        <name>1</name>
        <sequence type="displayed"/>
    </isoform>
    <isoform>
        <id>Q9WVS4-2</id>
        <name>2</name>
        <sequence type="described" ref="VSP_009147 VSP_009148 VSP_009149 VSP_009150"/>
    </isoform>
</comment>
<comment type="tissue specificity">
    <text>Highly expressed in testis, and less in kidney, brain and lung.</text>
</comment>
<comment type="PTM">
    <text>Autophosphorylated.</text>
</comment>
<comment type="similarity">
    <text evidence="7">Belongs to the protein kinase superfamily. CMGC Ser/Thr protein kinase family. CDC2/CDKX subfamily.</text>
</comment>